<organism>
    <name type="scientific">Desulfitobacterium hafniense (strain Y51)</name>
    <dbReference type="NCBI Taxonomy" id="138119"/>
    <lineage>
        <taxon>Bacteria</taxon>
        <taxon>Bacillati</taxon>
        <taxon>Bacillota</taxon>
        <taxon>Clostridia</taxon>
        <taxon>Eubacteriales</taxon>
        <taxon>Desulfitobacteriaceae</taxon>
        <taxon>Desulfitobacterium</taxon>
    </lineage>
</organism>
<name>PUR9_DESHY</name>
<protein>
    <recommendedName>
        <fullName evidence="1">Bifunctional purine biosynthesis protein PurH</fullName>
    </recommendedName>
    <domain>
        <recommendedName>
            <fullName evidence="1">Phosphoribosylaminoimidazolecarboxamide formyltransferase</fullName>
            <ecNumber evidence="1">2.1.2.3</ecNumber>
        </recommendedName>
        <alternativeName>
            <fullName evidence="1">AICAR transformylase</fullName>
        </alternativeName>
    </domain>
    <domain>
        <recommendedName>
            <fullName evidence="1">IMP cyclohydrolase</fullName>
            <ecNumber evidence="1">3.5.4.10</ecNumber>
        </recommendedName>
        <alternativeName>
            <fullName evidence="1">ATIC</fullName>
        </alternativeName>
        <alternativeName>
            <fullName evidence="1">IMP synthase</fullName>
        </alternativeName>
        <alternativeName>
            <fullName evidence="1">Inosinicase</fullName>
        </alternativeName>
    </domain>
</protein>
<evidence type="ECO:0000255" key="1">
    <source>
        <dbReference type="HAMAP-Rule" id="MF_00139"/>
    </source>
</evidence>
<evidence type="ECO:0000255" key="2">
    <source>
        <dbReference type="PROSITE-ProRule" id="PRU01202"/>
    </source>
</evidence>
<sequence>MNRRAVLSVSNKTGLVELARGLVELGFDLISTGGTFKTLTEAGLPVRYVTEVTGFPEILDGRVKTLHPRIHGGILARATAEHLQQLEDNGIGLIDLVVVNLYPFKETIARPGVSFQEAIENIDIGGPSMVRAAAKNQERVSIVVNPERYPEVLQALREQGEISYDMRKRLAAEAFAHTAEYDQCIAGYLTAALAEESVSSSSSPFPATITLGGQKAQDLRYGENPAQKAAFYRGADAAGTLAYGEQIQGKELSYNNWMDMDAAWGIVQDFSEPACAIIKHTNPCGTALGKTALEAYEKALAADPVSAFGGIIAFNRTVDAECAASLKAHFYEVIVAHEFSSDARAILQEKKNLRLVKVAQDGKPAHTPWKVRSIQGGFLIQEEDEGTTPISAWEVVSKRQPEPEELRELDFAWRVVKHVKSNAIVLAKAGQTLGVGAGQMNRVGSVKIALEQAGDKAQGAYLASDAFFPFPDSLEEAAKAGVRAVVQPGGSVRDAEVIEAADRLNLIMVFTNRRHFKH</sequence>
<accession>Q24QH6</accession>
<keyword id="KW-0378">Hydrolase</keyword>
<keyword id="KW-0511">Multifunctional enzyme</keyword>
<keyword id="KW-0658">Purine biosynthesis</keyword>
<keyword id="KW-1185">Reference proteome</keyword>
<keyword id="KW-0808">Transferase</keyword>
<proteinExistence type="inferred from homology"/>
<comment type="catalytic activity">
    <reaction evidence="1">
        <text>(6R)-10-formyltetrahydrofolate + 5-amino-1-(5-phospho-beta-D-ribosyl)imidazole-4-carboxamide = 5-formamido-1-(5-phospho-D-ribosyl)imidazole-4-carboxamide + (6S)-5,6,7,8-tetrahydrofolate</text>
        <dbReference type="Rhea" id="RHEA:22192"/>
        <dbReference type="ChEBI" id="CHEBI:57453"/>
        <dbReference type="ChEBI" id="CHEBI:58467"/>
        <dbReference type="ChEBI" id="CHEBI:58475"/>
        <dbReference type="ChEBI" id="CHEBI:195366"/>
        <dbReference type="EC" id="2.1.2.3"/>
    </reaction>
</comment>
<comment type="catalytic activity">
    <reaction evidence="1">
        <text>IMP + H2O = 5-formamido-1-(5-phospho-D-ribosyl)imidazole-4-carboxamide</text>
        <dbReference type="Rhea" id="RHEA:18445"/>
        <dbReference type="ChEBI" id="CHEBI:15377"/>
        <dbReference type="ChEBI" id="CHEBI:58053"/>
        <dbReference type="ChEBI" id="CHEBI:58467"/>
        <dbReference type="EC" id="3.5.4.10"/>
    </reaction>
</comment>
<comment type="pathway">
    <text evidence="1">Purine metabolism; IMP biosynthesis via de novo pathway; 5-formamido-1-(5-phospho-D-ribosyl)imidazole-4-carboxamide from 5-amino-1-(5-phospho-D-ribosyl)imidazole-4-carboxamide (10-formyl THF route): step 1/1.</text>
</comment>
<comment type="pathway">
    <text evidence="1">Purine metabolism; IMP biosynthesis via de novo pathway; IMP from 5-formamido-1-(5-phospho-D-ribosyl)imidazole-4-carboxamide: step 1/1.</text>
</comment>
<comment type="domain">
    <text evidence="1">The IMP cyclohydrolase activity resides in the N-terminal region.</text>
</comment>
<comment type="similarity">
    <text evidence="1">Belongs to the PurH family.</text>
</comment>
<reference key="1">
    <citation type="journal article" date="2006" name="J. Bacteriol.">
        <title>Complete genome sequence of the dehalorespiring bacterium Desulfitobacterium hafniense Y51 and comparison with Dehalococcoides ethenogenes 195.</title>
        <authorList>
            <person name="Nonaka H."/>
            <person name="Keresztes G."/>
            <person name="Shinoda Y."/>
            <person name="Ikenaga Y."/>
            <person name="Abe M."/>
            <person name="Naito K."/>
            <person name="Inatomi K."/>
            <person name="Furukawa K."/>
            <person name="Inui M."/>
            <person name="Yukawa H."/>
        </authorList>
    </citation>
    <scope>NUCLEOTIDE SEQUENCE [LARGE SCALE GENOMIC DNA]</scope>
    <source>
        <strain>Y51</strain>
    </source>
</reference>
<gene>
    <name evidence="1" type="primary">purH</name>
    <name type="ordered locus">DSY3927</name>
</gene>
<feature type="chain" id="PRO_1000018885" description="Bifunctional purine biosynthesis protein PurH">
    <location>
        <begin position="1"/>
        <end position="518"/>
    </location>
</feature>
<feature type="domain" description="MGS-like" evidence="2">
    <location>
        <begin position="1"/>
        <end position="144"/>
    </location>
</feature>
<dbReference type="EC" id="2.1.2.3" evidence="1"/>
<dbReference type="EC" id="3.5.4.10" evidence="1"/>
<dbReference type="EMBL" id="AP008230">
    <property type="protein sequence ID" value="BAE85716.1"/>
    <property type="molecule type" value="Genomic_DNA"/>
</dbReference>
<dbReference type="RefSeq" id="WP_005817232.1">
    <property type="nucleotide sequence ID" value="NC_007907.1"/>
</dbReference>
<dbReference type="SMR" id="Q24QH6"/>
<dbReference type="STRING" id="138119.DSY3927"/>
<dbReference type="KEGG" id="dsy:DSY3927"/>
<dbReference type="eggNOG" id="COG0138">
    <property type="taxonomic scope" value="Bacteria"/>
</dbReference>
<dbReference type="HOGENOM" id="CLU_016316_5_2_9"/>
<dbReference type="UniPathway" id="UPA00074">
    <property type="reaction ID" value="UER00133"/>
</dbReference>
<dbReference type="UniPathway" id="UPA00074">
    <property type="reaction ID" value="UER00135"/>
</dbReference>
<dbReference type="Proteomes" id="UP000001946">
    <property type="component" value="Chromosome"/>
</dbReference>
<dbReference type="GO" id="GO:0005829">
    <property type="term" value="C:cytosol"/>
    <property type="evidence" value="ECO:0007669"/>
    <property type="project" value="TreeGrafter"/>
</dbReference>
<dbReference type="GO" id="GO:0003937">
    <property type="term" value="F:IMP cyclohydrolase activity"/>
    <property type="evidence" value="ECO:0007669"/>
    <property type="project" value="UniProtKB-UniRule"/>
</dbReference>
<dbReference type="GO" id="GO:0004643">
    <property type="term" value="F:phosphoribosylaminoimidazolecarboxamide formyltransferase activity"/>
    <property type="evidence" value="ECO:0007669"/>
    <property type="project" value="UniProtKB-UniRule"/>
</dbReference>
<dbReference type="GO" id="GO:0006189">
    <property type="term" value="P:'de novo' IMP biosynthetic process"/>
    <property type="evidence" value="ECO:0007669"/>
    <property type="project" value="UniProtKB-UniRule"/>
</dbReference>
<dbReference type="CDD" id="cd01421">
    <property type="entry name" value="IMPCH"/>
    <property type="match status" value="1"/>
</dbReference>
<dbReference type="FunFam" id="3.40.140.20:FF:000001">
    <property type="entry name" value="Bifunctional purine biosynthesis protein PurH"/>
    <property type="match status" value="1"/>
</dbReference>
<dbReference type="FunFam" id="3.40.140.20:FF:000002">
    <property type="entry name" value="Bifunctional purine biosynthesis protein PurH"/>
    <property type="match status" value="1"/>
</dbReference>
<dbReference type="FunFam" id="3.40.50.1380:FF:000001">
    <property type="entry name" value="Bifunctional purine biosynthesis protein PurH"/>
    <property type="match status" value="1"/>
</dbReference>
<dbReference type="Gene3D" id="3.40.140.20">
    <property type="match status" value="2"/>
</dbReference>
<dbReference type="Gene3D" id="3.40.50.1380">
    <property type="entry name" value="Methylglyoxal synthase-like domain"/>
    <property type="match status" value="1"/>
</dbReference>
<dbReference type="HAMAP" id="MF_00139">
    <property type="entry name" value="PurH"/>
    <property type="match status" value="1"/>
</dbReference>
<dbReference type="InterPro" id="IPR024051">
    <property type="entry name" value="AICAR_Tfase_dup_dom_sf"/>
</dbReference>
<dbReference type="InterPro" id="IPR016193">
    <property type="entry name" value="Cytidine_deaminase-like"/>
</dbReference>
<dbReference type="InterPro" id="IPR011607">
    <property type="entry name" value="MGS-like_dom"/>
</dbReference>
<dbReference type="InterPro" id="IPR036914">
    <property type="entry name" value="MGS-like_dom_sf"/>
</dbReference>
<dbReference type="InterPro" id="IPR002695">
    <property type="entry name" value="PurH-like"/>
</dbReference>
<dbReference type="NCBIfam" id="NF002049">
    <property type="entry name" value="PRK00881.1"/>
    <property type="match status" value="1"/>
</dbReference>
<dbReference type="NCBIfam" id="TIGR00355">
    <property type="entry name" value="purH"/>
    <property type="match status" value="1"/>
</dbReference>
<dbReference type="PANTHER" id="PTHR11692:SF0">
    <property type="entry name" value="BIFUNCTIONAL PURINE BIOSYNTHESIS PROTEIN ATIC"/>
    <property type="match status" value="1"/>
</dbReference>
<dbReference type="PANTHER" id="PTHR11692">
    <property type="entry name" value="BIFUNCTIONAL PURINE BIOSYNTHESIS PROTEIN PURH"/>
    <property type="match status" value="1"/>
</dbReference>
<dbReference type="Pfam" id="PF01808">
    <property type="entry name" value="AICARFT_IMPCHas"/>
    <property type="match status" value="1"/>
</dbReference>
<dbReference type="Pfam" id="PF02142">
    <property type="entry name" value="MGS"/>
    <property type="match status" value="1"/>
</dbReference>
<dbReference type="PIRSF" id="PIRSF000414">
    <property type="entry name" value="AICARFT_IMPCHas"/>
    <property type="match status" value="1"/>
</dbReference>
<dbReference type="SMART" id="SM00798">
    <property type="entry name" value="AICARFT_IMPCHas"/>
    <property type="match status" value="1"/>
</dbReference>
<dbReference type="SMART" id="SM00851">
    <property type="entry name" value="MGS"/>
    <property type="match status" value="1"/>
</dbReference>
<dbReference type="SUPFAM" id="SSF53927">
    <property type="entry name" value="Cytidine deaminase-like"/>
    <property type="match status" value="1"/>
</dbReference>
<dbReference type="SUPFAM" id="SSF52335">
    <property type="entry name" value="Methylglyoxal synthase-like"/>
    <property type="match status" value="1"/>
</dbReference>
<dbReference type="PROSITE" id="PS51855">
    <property type="entry name" value="MGS"/>
    <property type="match status" value="1"/>
</dbReference>